<evidence type="ECO:0000250" key="1">
    <source>
        <dbReference type="UniProtKB" id="O95198"/>
    </source>
</evidence>
<evidence type="ECO:0000250" key="2">
    <source>
        <dbReference type="UniProtKB" id="Q8JZP3"/>
    </source>
</evidence>
<evidence type="ECO:0000255" key="3">
    <source>
        <dbReference type="PROSITE-ProRule" id="PRU00037"/>
    </source>
</evidence>
<evidence type="ECO:0000256" key="4">
    <source>
        <dbReference type="SAM" id="MobiDB-lite"/>
    </source>
</evidence>
<evidence type="ECO:0000269" key="5">
    <source>
    </source>
</evidence>
<evidence type="ECO:0000269" key="6">
    <source>
    </source>
</evidence>
<evidence type="ECO:0000269" key="7">
    <source>
    </source>
</evidence>
<evidence type="ECO:0000303" key="8">
    <source ref="2"/>
</evidence>
<evidence type="ECO:0000305" key="9"/>
<evidence type="ECO:0000312" key="10">
    <source>
        <dbReference type="RGD" id="1306388"/>
    </source>
</evidence>
<reference key="1">
    <citation type="journal article" date="2004" name="Nature">
        <title>Genome sequence of the Brown Norway rat yields insights into mammalian evolution.</title>
        <authorList>
            <person name="Gibbs R.A."/>
            <person name="Weinstock G.M."/>
            <person name="Metzker M.L."/>
            <person name="Muzny D.M."/>
            <person name="Sodergren E.J."/>
            <person name="Scherer S."/>
            <person name="Scott G."/>
            <person name="Steffen D."/>
            <person name="Worley K.C."/>
            <person name="Burch P.E."/>
            <person name="Okwuonu G."/>
            <person name="Hines S."/>
            <person name="Lewis L."/>
            <person name="Deramo C."/>
            <person name="Delgado O."/>
            <person name="Dugan-Rocha S."/>
            <person name="Miner G."/>
            <person name="Morgan M."/>
            <person name="Hawes A."/>
            <person name="Gill R."/>
            <person name="Holt R.A."/>
            <person name="Adams M.D."/>
            <person name="Amanatides P.G."/>
            <person name="Baden-Tillson H."/>
            <person name="Barnstead M."/>
            <person name="Chin S."/>
            <person name="Evans C.A."/>
            <person name="Ferriera S."/>
            <person name="Fosler C."/>
            <person name="Glodek A."/>
            <person name="Gu Z."/>
            <person name="Jennings D."/>
            <person name="Kraft C.L."/>
            <person name="Nguyen T."/>
            <person name="Pfannkoch C.M."/>
            <person name="Sitter C."/>
            <person name="Sutton G.G."/>
            <person name="Venter J.C."/>
            <person name="Woodage T."/>
            <person name="Smith D."/>
            <person name="Lee H.-M."/>
            <person name="Gustafson E."/>
            <person name="Cahill P."/>
            <person name="Kana A."/>
            <person name="Doucette-Stamm L."/>
            <person name="Weinstock K."/>
            <person name="Fechtel K."/>
            <person name="Weiss R.B."/>
            <person name="Dunn D.M."/>
            <person name="Green E.D."/>
            <person name="Blakesley R.W."/>
            <person name="Bouffard G.G."/>
            <person name="De Jong P.J."/>
            <person name="Osoegawa K."/>
            <person name="Zhu B."/>
            <person name="Marra M."/>
            <person name="Schein J."/>
            <person name="Bosdet I."/>
            <person name="Fjell C."/>
            <person name="Jones S."/>
            <person name="Krzywinski M."/>
            <person name="Mathewson C."/>
            <person name="Siddiqui A."/>
            <person name="Wye N."/>
            <person name="McPherson J."/>
            <person name="Zhao S."/>
            <person name="Fraser C.M."/>
            <person name="Shetty J."/>
            <person name="Shatsman S."/>
            <person name="Geer K."/>
            <person name="Chen Y."/>
            <person name="Abramzon S."/>
            <person name="Nierman W.C."/>
            <person name="Havlak P.H."/>
            <person name="Chen R."/>
            <person name="Durbin K.J."/>
            <person name="Egan A."/>
            <person name="Ren Y."/>
            <person name="Song X.-Z."/>
            <person name="Li B."/>
            <person name="Liu Y."/>
            <person name="Qin X."/>
            <person name="Cawley S."/>
            <person name="Cooney A.J."/>
            <person name="D'Souza L.M."/>
            <person name="Martin K."/>
            <person name="Wu J.Q."/>
            <person name="Gonzalez-Garay M.L."/>
            <person name="Jackson A.R."/>
            <person name="Kalafus K.J."/>
            <person name="McLeod M.P."/>
            <person name="Milosavljevic A."/>
            <person name="Virk D."/>
            <person name="Volkov A."/>
            <person name="Wheeler D.A."/>
            <person name="Zhang Z."/>
            <person name="Bailey J.A."/>
            <person name="Eichler E.E."/>
            <person name="Tuzun E."/>
            <person name="Birney E."/>
            <person name="Mongin E."/>
            <person name="Ureta-Vidal A."/>
            <person name="Woodwark C."/>
            <person name="Zdobnov E."/>
            <person name="Bork P."/>
            <person name="Suyama M."/>
            <person name="Torrents D."/>
            <person name="Alexandersson M."/>
            <person name="Trask B.J."/>
            <person name="Young J.M."/>
            <person name="Huang H."/>
            <person name="Wang H."/>
            <person name="Xing H."/>
            <person name="Daniels S."/>
            <person name="Gietzen D."/>
            <person name="Schmidt J."/>
            <person name="Stevens K."/>
            <person name="Vitt U."/>
            <person name="Wingrove J."/>
            <person name="Camara F."/>
            <person name="Mar Alba M."/>
            <person name="Abril J.F."/>
            <person name="Guigo R."/>
            <person name="Smit A."/>
            <person name="Dubchak I."/>
            <person name="Rubin E.M."/>
            <person name="Couronne O."/>
            <person name="Poliakov A."/>
            <person name="Huebner N."/>
            <person name="Ganten D."/>
            <person name="Goesele C."/>
            <person name="Hummel O."/>
            <person name="Kreitler T."/>
            <person name="Lee Y.-A."/>
            <person name="Monti J."/>
            <person name="Schulz H."/>
            <person name="Zimdahl H."/>
            <person name="Himmelbauer H."/>
            <person name="Lehrach H."/>
            <person name="Jacob H.J."/>
            <person name="Bromberg S."/>
            <person name="Gullings-Handley J."/>
            <person name="Jensen-Seaman M.I."/>
            <person name="Kwitek A.E."/>
            <person name="Lazar J."/>
            <person name="Pasko D."/>
            <person name="Tonellato P.J."/>
            <person name="Twigger S."/>
            <person name="Ponting C.P."/>
            <person name="Duarte J.M."/>
            <person name="Rice S."/>
            <person name="Goodstadt L."/>
            <person name="Beatson S.A."/>
            <person name="Emes R.D."/>
            <person name="Winter E.E."/>
            <person name="Webber C."/>
            <person name="Brandt P."/>
            <person name="Nyakatura G."/>
            <person name="Adetobi M."/>
            <person name="Chiaromonte F."/>
            <person name="Elnitski L."/>
            <person name="Eswara P."/>
            <person name="Hardison R.C."/>
            <person name="Hou M."/>
            <person name="Kolbe D."/>
            <person name="Makova K."/>
            <person name="Miller W."/>
            <person name="Nekrutenko A."/>
            <person name="Riemer C."/>
            <person name="Schwartz S."/>
            <person name="Taylor J."/>
            <person name="Yang S."/>
            <person name="Zhang Y."/>
            <person name="Lindpaintner K."/>
            <person name="Andrews T.D."/>
            <person name="Caccamo M."/>
            <person name="Clamp M."/>
            <person name="Clarke L."/>
            <person name="Curwen V."/>
            <person name="Durbin R.M."/>
            <person name="Eyras E."/>
            <person name="Searle S.M."/>
            <person name="Cooper G.M."/>
            <person name="Batzoglou S."/>
            <person name="Brudno M."/>
            <person name="Sidow A."/>
            <person name="Stone E.A."/>
            <person name="Payseur B.A."/>
            <person name="Bourque G."/>
            <person name="Lopez-Otin C."/>
            <person name="Puente X.S."/>
            <person name="Chakrabarti K."/>
            <person name="Chatterji S."/>
            <person name="Dewey C."/>
            <person name="Pachter L."/>
            <person name="Bray N."/>
            <person name="Yap V.B."/>
            <person name="Caspi A."/>
            <person name="Tesler G."/>
            <person name="Pevzner P.A."/>
            <person name="Haussler D."/>
            <person name="Roskin K.M."/>
            <person name="Baertsch R."/>
            <person name="Clawson H."/>
            <person name="Furey T.S."/>
            <person name="Hinrichs A.S."/>
            <person name="Karolchik D."/>
            <person name="Kent W.J."/>
            <person name="Rosenbloom K.R."/>
            <person name="Trumbower H."/>
            <person name="Weirauch M."/>
            <person name="Cooper D.N."/>
            <person name="Stenson P.D."/>
            <person name="Ma B."/>
            <person name="Brent M."/>
            <person name="Arumugam M."/>
            <person name="Shteynberg D."/>
            <person name="Copley R.R."/>
            <person name="Taylor M.S."/>
            <person name="Riethman H."/>
            <person name="Mudunuri U."/>
            <person name="Peterson J."/>
            <person name="Guyer M."/>
            <person name="Felsenfeld A."/>
            <person name="Old S."/>
            <person name="Mockrin S."/>
            <person name="Collins F.S."/>
        </authorList>
    </citation>
    <scope>NUCLEOTIDE SEQUENCE [LARGE SCALE GENOMIC DNA]</scope>
    <source>
        <strain>Brown Norway</strain>
    </source>
</reference>
<reference key="2">
    <citation type="submission" date="2010-06" db="EMBL/GenBank/DDBJ databases">
        <authorList>
            <person name="Katinka M."/>
            <person name="Da Silva C."/>
            <person name="Cruaud C."/>
            <person name="Pravenec M."/>
            <person name="Poulain J."/>
            <person name="Wincker P."/>
            <person name="Weissenbach J."/>
        </authorList>
    </citation>
    <scope>NUCLEOTIDE SEQUENCE [LARGE SCALE MRNA] OF 1-175</scope>
    <source>
        <strain>Sprague-Dawley</strain>
        <tissue>Brain</tissue>
    </source>
</reference>
<reference key="3">
    <citation type="journal article" date="1999" name="Mol. Biol. Cell">
        <title>Characterization of Mayven, a novel actin-binding protein predominantly expressed in brain.</title>
        <authorList>
            <person name="Soltysik-Espanola M.B."/>
            <person name="Rogers R.A."/>
            <person name="Jiang S."/>
            <person name="Kim T.A."/>
            <person name="Gaedigk R."/>
            <person name="White R.A."/>
            <person name="Avraham H."/>
            <person name="Avraham S."/>
        </authorList>
    </citation>
    <scope>SUBCELLULAR LOCATION</scope>
    <scope>ACTIN BINDING</scope>
    <scope>SUBUNIT</scope>
    <scope>TISSUE SPECIFICITY</scope>
</reference>
<reference key="4">
    <citation type="journal article" date="2005" name="J. Neurochem.">
        <title>Process elongation of oligodendrocytes is promoted by the Kelch-related actin-binding protein Mayven.</title>
        <authorList>
            <person name="Jiang S."/>
            <person name="Avraham H.K."/>
            <person name="Park S.Y."/>
            <person name="Kim T.A."/>
            <person name="Bu X."/>
            <person name="Seng S."/>
            <person name="Avraham S."/>
        </authorList>
    </citation>
    <scope>FUNCTION</scope>
    <scope>SUBCELLULAR LOCATION</scope>
    <scope>INTERACTION WITH FYN</scope>
    <scope>TISSUE SPECIFICITY</scope>
</reference>
<reference key="5">
    <citation type="journal article" date="2010" name="BMC Neurosci.">
        <title>Subcellular localization of Mayven following expression of wild type and mutant EGFP tagged cDNAs.</title>
        <authorList>
            <person name="Montague P."/>
            <person name="Kennedy P.G."/>
            <person name="Barnett S.C."/>
        </authorList>
    </citation>
    <scope>FUNCTION</scope>
    <scope>SUBCELLULAR LOCATION</scope>
</reference>
<proteinExistence type="evidence at protein level"/>
<feature type="chain" id="PRO_0000422073" description="Kelch-like protein 2">
    <location>
        <begin position="1"/>
        <end position="593"/>
    </location>
</feature>
<feature type="domain" description="BTB" evidence="3">
    <location>
        <begin position="56"/>
        <end position="123"/>
    </location>
</feature>
<feature type="repeat" description="Kelch 1">
    <location>
        <begin position="308"/>
        <end position="353"/>
    </location>
</feature>
<feature type="repeat" description="Kelch 2">
    <location>
        <begin position="354"/>
        <end position="400"/>
    </location>
</feature>
<feature type="repeat" description="Kelch 3">
    <location>
        <begin position="402"/>
        <end position="447"/>
    </location>
</feature>
<feature type="repeat" description="Kelch 4">
    <location>
        <begin position="449"/>
        <end position="496"/>
    </location>
</feature>
<feature type="repeat" description="Kelch 5">
    <location>
        <begin position="497"/>
        <end position="543"/>
    </location>
</feature>
<feature type="repeat" description="Kelch 6">
    <location>
        <begin position="545"/>
        <end position="591"/>
    </location>
</feature>
<feature type="region of interest" description="Disordered" evidence="4">
    <location>
        <begin position="1"/>
        <end position="29"/>
    </location>
</feature>
<feature type="compositionally biased region" description="Basic and acidic residues" evidence="4">
    <location>
        <begin position="17"/>
        <end position="29"/>
    </location>
</feature>
<organism>
    <name type="scientific">Rattus norvegicus</name>
    <name type="common">Rat</name>
    <dbReference type="NCBI Taxonomy" id="10116"/>
    <lineage>
        <taxon>Eukaryota</taxon>
        <taxon>Metazoa</taxon>
        <taxon>Chordata</taxon>
        <taxon>Craniata</taxon>
        <taxon>Vertebrata</taxon>
        <taxon>Euteleostomi</taxon>
        <taxon>Mammalia</taxon>
        <taxon>Eutheria</taxon>
        <taxon>Euarchontoglires</taxon>
        <taxon>Glires</taxon>
        <taxon>Rodentia</taxon>
        <taxon>Myomorpha</taxon>
        <taxon>Muroidea</taxon>
        <taxon>Muridae</taxon>
        <taxon>Murinae</taxon>
        <taxon>Rattus</taxon>
    </lineage>
</organism>
<sequence>MESPPLPPACTKQGHQKPLDSKDENPEKHCPLTVNPWHMKKAFKVMNELRSQNLLCDVTIVAEDMEIPAHRVVLAACSPYFHAMFTGEMSESRAKRVRIKEVDGWTLRMLIDYVYTAEIQVTEENVQVLLPAAGLLQLQDVKKTCCEFLESQLHPVNCLGIRAFADMHACTDLLNKANTYAEQHFADVVLSEEFLNLGIEQVCSLISSDKLTISSEEKVFEAVIAWVNHDKDVRQEFMARLMEHVRLPLLPREYLVQRVEEEALVKNSSACKDYLIEAMKYHLLPTEQRMLMKSVRTRLRTPMNLPKLMVVVGGQAPKAIRSVECYDFKEERWHQVAELPSRRCRAGMVYMAGLVFAVGGFNGSLRVRTVDSYDPVKDQWTSVANMRDRRSTLGAAVLNGLLYAVGGFDGSTGLSSVEAYNIKSNEWFHVAPMNTRRSSVGVGVVGGLLYAVGGYDGASRQCLSTVECYNATANEWTYIAEMSTRRSGAGVGVLNNLLYAVGGHDGPLVRKSVEVYDPTTNAWRQVADMNMCRRNAGVCAVNGLLYVVGGDDGSCNLASVEYYNPTTDKWTVVSSCMSTGRSYAGVTVIDKPL</sequence>
<protein>
    <recommendedName>
        <fullName evidence="9">Kelch-like protein 2</fullName>
    </recommendedName>
    <alternativeName>
        <fullName evidence="8">Mayven</fullName>
    </alternativeName>
</protein>
<accession>F1LZF0</accession>
<dbReference type="EMBL" id="FQ080481">
    <property type="status" value="NOT_ANNOTATED_CDS"/>
    <property type="molecule type" value="mRNA"/>
</dbReference>
<dbReference type="RefSeq" id="NP_001406494.1">
    <property type="nucleotide sequence ID" value="NM_001419565.1"/>
</dbReference>
<dbReference type="SMR" id="F1LZF0"/>
<dbReference type="FunCoup" id="F1LZF0">
    <property type="interactions" value="2340"/>
</dbReference>
<dbReference type="STRING" id="10116.ENSRNOP00000049839"/>
<dbReference type="PhosphoSitePlus" id="F1LZF0"/>
<dbReference type="PaxDb" id="10116-ENSRNOP00000049839"/>
<dbReference type="Ensembl" id="ENSRNOT00000047223.6">
    <property type="protein sequence ID" value="ENSRNOP00000049839.6"/>
    <property type="gene ID" value="ENSRNOG00000029441.6"/>
</dbReference>
<dbReference type="GeneID" id="290692"/>
<dbReference type="AGR" id="RGD:1306388"/>
<dbReference type="RGD" id="1306388">
    <property type="gene designation" value="Klhl2"/>
</dbReference>
<dbReference type="eggNOG" id="KOG4441">
    <property type="taxonomic scope" value="Eukaryota"/>
</dbReference>
<dbReference type="GeneTree" id="ENSGT00940000156434"/>
<dbReference type="InParanoid" id="F1LZF0"/>
<dbReference type="OMA" id="RPPACTK"/>
<dbReference type="OrthoDB" id="45365at2759"/>
<dbReference type="TreeFam" id="TF329218"/>
<dbReference type="Reactome" id="R-RNO-8951664">
    <property type="pathway name" value="Neddylation"/>
</dbReference>
<dbReference type="Reactome" id="R-RNO-983168">
    <property type="pathway name" value="Antigen processing: Ubiquitination &amp; Proteasome degradation"/>
</dbReference>
<dbReference type="UniPathway" id="UPA00143"/>
<dbReference type="PRO" id="PR:F1LZF0"/>
<dbReference type="Proteomes" id="UP000002494">
    <property type="component" value="Chromosome 16"/>
</dbReference>
<dbReference type="GO" id="GO:0015629">
    <property type="term" value="C:actin cytoskeleton"/>
    <property type="evidence" value="ECO:0000250"/>
    <property type="project" value="UniProtKB"/>
</dbReference>
<dbReference type="GO" id="GO:0031463">
    <property type="term" value="C:Cul3-RING ubiquitin ligase complex"/>
    <property type="evidence" value="ECO:0000250"/>
    <property type="project" value="UniProtKB"/>
</dbReference>
<dbReference type="GO" id="GO:0005737">
    <property type="term" value="C:cytoplasm"/>
    <property type="evidence" value="ECO:0000250"/>
    <property type="project" value="UniProtKB"/>
</dbReference>
<dbReference type="GO" id="GO:0005829">
    <property type="term" value="C:cytosol"/>
    <property type="evidence" value="ECO:0007669"/>
    <property type="project" value="UniProtKB-SubCell"/>
</dbReference>
<dbReference type="GO" id="GO:0030027">
    <property type="term" value="C:lamellipodium"/>
    <property type="evidence" value="ECO:0007669"/>
    <property type="project" value="UniProtKB-SubCell"/>
</dbReference>
<dbReference type="GO" id="GO:0001726">
    <property type="term" value="C:ruffle"/>
    <property type="evidence" value="ECO:0007669"/>
    <property type="project" value="UniProtKB-SubCell"/>
</dbReference>
<dbReference type="GO" id="GO:0003779">
    <property type="term" value="F:actin binding"/>
    <property type="evidence" value="ECO:0000250"/>
    <property type="project" value="UniProtKB"/>
</dbReference>
<dbReference type="GO" id="GO:0042802">
    <property type="term" value="F:identical protein binding"/>
    <property type="evidence" value="ECO:0000266"/>
    <property type="project" value="RGD"/>
</dbReference>
<dbReference type="GO" id="GO:1990756">
    <property type="term" value="F:ubiquitin-like ligase-substrate adaptor activity"/>
    <property type="evidence" value="ECO:0000250"/>
    <property type="project" value="UniProtKB"/>
</dbReference>
<dbReference type="GO" id="GO:0043161">
    <property type="term" value="P:proteasome-mediated ubiquitin-dependent protein catabolic process"/>
    <property type="evidence" value="ECO:0000318"/>
    <property type="project" value="GO_Central"/>
</dbReference>
<dbReference type="GO" id="GO:0016567">
    <property type="term" value="P:protein ubiquitination"/>
    <property type="evidence" value="ECO:0000250"/>
    <property type="project" value="UniProtKB"/>
</dbReference>
<dbReference type="CDD" id="cd18512">
    <property type="entry name" value="BACK_KLHL2_Mayven"/>
    <property type="match status" value="1"/>
</dbReference>
<dbReference type="CDD" id="cd18338">
    <property type="entry name" value="BTB_POZ_KLHL2_Mayven"/>
    <property type="match status" value="1"/>
</dbReference>
<dbReference type="FunFam" id="1.25.40.420:FF:000001">
    <property type="entry name" value="Kelch-like family member 12"/>
    <property type="match status" value="1"/>
</dbReference>
<dbReference type="FunFam" id="2.120.10.80:FF:000002">
    <property type="entry name" value="Kelch-like family member 2"/>
    <property type="match status" value="1"/>
</dbReference>
<dbReference type="FunFam" id="3.30.710.10:FF:000001">
    <property type="entry name" value="Kelch-like family member 20"/>
    <property type="match status" value="1"/>
</dbReference>
<dbReference type="Gene3D" id="1.25.40.420">
    <property type="match status" value="1"/>
</dbReference>
<dbReference type="Gene3D" id="2.120.10.80">
    <property type="entry name" value="Kelch-type beta propeller"/>
    <property type="match status" value="1"/>
</dbReference>
<dbReference type="Gene3D" id="3.30.710.10">
    <property type="entry name" value="Potassium Channel Kv1.1, Chain A"/>
    <property type="match status" value="1"/>
</dbReference>
<dbReference type="InterPro" id="IPR011705">
    <property type="entry name" value="BACK"/>
</dbReference>
<dbReference type="InterPro" id="IPR017096">
    <property type="entry name" value="BTB-kelch_protein"/>
</dbReference>
<dbReference type="InterPro" id="IPR000210">
    <property type="entry name" value="BTB/POZ_dom"/>
</dbReference>
<dbReference type="InterPro" id="IPR015915">
    <property type="entry name" value="Kelch-typ_b-propeller"/>
</dbReference>
<dbReference type="InterPro" id="IPR006652">
    <property type="entry name" value="Kelch_1"/>
</dbReference>
<dbReference type="InterPro" id="IPR044072">
    <property type="entry name" value="KLHL2_BTB/POZ"/>
</dbReference>
<dbReference type="InterPro" id="IPR011333">
    <property type="entry name" value="SKP1/BTB/POZ_sf"/>
</dbReference>
<dbReference type="PANTHER" id="PTHR24412">
    <property type="entry name" value="KELCH PROTEIN"/>
    <property type="match status" value="1"/>
</dbReference>
<dbReference type="PANTHER" id="PTHR24412:SF155">
    <property type="entry name" value="KELCH-LIKE PROTEIN 2"/>
    <property type="match status" value="1"/>
</dbReference>
<dbReference type="Pfam" id="PF07707">
    <property type="entry name" value="BACK"/>
    <property type="match status" value="1"/>
</dbReference>
<dbReference type="Pfam" id="PF00651">
    <property type="entry name" value="BTB"/>
    <property type="match status" value="1"/>
</dbReference>
<dbReference type="Pfam" id="PF01344">
    <property type="entry name" value="Kelch_1"/>
    <property type="match status" value="6"/>
</dbReference>
<dbReference type="PIRSF" id="PIRSF037037">
    <property type="entry name" value="Kelch-like_protein_gigaxonin"/>
    <property type="match status" value="1"/>
</dbReference>
<dbReference type="PRINTS" id="PR00501">
    <property type="entry name" value="KELCHREPEAT"/>
</dbReference>
<dbReference type="SMART" id="SM00875">
    <property type="entry name" value="BACK"/>
    <property type="match status" value="1"/>
</dbReference>
<dbReference type="SMART" id="SM00225">
    <property type="entry name" value="BTB"/>
    <property type="match status" value="1"/>
</dbReference>
<dbReference type="SMART" id="SM00612">
    <property type="entry name" value="Kelch"/>
    <property type="match status" value="6"/>
</dbReference>
<dbReference type="SUPFAM" id="SSF117281">
    <property type="entry name" value="Kelch motif"/>
    <property type="match status" value="1"/>
</dbReference>
<dbReference type="SUPFAM" id="SSF54695">
    <property type="entry name" value="POZ domain"/>
    <property type="match status" value="1"/>
</dbReference>
<dbReference type="PROSITE" id="PS50097">
    <property type="entry name" value="BTB"/>
    <property type="match status" value="1"/>
</dbReference>
<comment type="function">
    <text evidence="1 2 6 7">Substrate-specific adapter of a BCR (BTB-CUL3-RBX1) E3 ubiquitin ligase complex that mediates the ubiquitination of target proteins, such as NPTXR, WNK1, WNK3 and WNK4, leading most often to their proteasomal degradation (By similarity). The BCR(KLHL2) complex catalyzes ubiquitination and degradation of NPTXR (By similarity). Responsible for degradative ubiquitination of the WNK kinases WNK1, WNK3 and WNK4 (By similarity). Plays a role in the reorganization of the actin cytoskeleton (PubMed:15715669, PubMed:20504342). Promotes growth of cell projections in oligodendrocyte precursors (PubMed:15715669, PubMed:20504342).</text>
</comment>
<comment type="pathway">
    <text evidence="1">Protein modification; protein ubiquitination.</text>
</comment>
<comment type="subunit">
    <text evidence="1 5 6">Component of the BCR(KLHL2) E3 ubiquitin ligase complex, at least composed of CUL3 and KLHL2 and RBX1 (By similarity). Binds actin (PubMed:10397770). Interacts with KLHL12 (By similarity). Interacts (via N-terminus) with FYN (via SH3 domain) (PubMed:15715669).</text>
</comment>
<comment type="subcellular location">
    <subcellularLocation>
        <location evidence="1">Cytoplasm</location>
        <location evidence="1">Cytoskeleton</location>
    </subcellularLocation>
    <subcellularLocation>
        <location evidence="2">Cell projection</location>
        <location evidence="2">Ruffle</location>
    </subcellularLocation>
    <subcellularLocation>
        <location evidence="1">Cell projection</location>
    </subcellularLocation>
    <subcellularLocation>
        <location evidence="7">Cell projection</location>
        <location evidence="7">Lamellipodium</location>
    </subcellularLocation>
    <subcellularLocation>
        <location evidence="2">Cytoplasm</location>
        <location evidence="2">Cytosol</location>
    </subcellularLocation>
    <text evidence="1 2">A proportion colocalizes with the actin cytoskeleton (By similarity). When over-expressed, colocalizes with NPTXR in perinuclear aggresomes (By similarity).</text>
</comment>
<comment type="tissue specificity">
    <text evidence="5 6">Detected in brain neurons, oligodendrocytes and astrocytes (at protein level).</text>
</comment>
<keyword id="KW-0009">Actin-binding</keyword>
<keyword id="KW-0966">Cell projection</keyword>
<keyword id="KW-0963">Cytoplasm</keyword>
<keyword id="KW-0206">Cytoskeleton</keyword>
<keyword id="KW-0880">Kelch repeat</keyword>
<keyword id="KW-1185">Reference proteome</keyword>
<keyword id="KW-0677">Repeat</keyword>
<keyword id="KW-0833">Ubl conjugation pathway</keyword>
<name>KLHL2_RAT</name>
<gene>
    <name evidence="10" type="primary">Klhl2</name>
</gene>